<gene>
    <name evidence="2" type="primary">psbD</name>
</gene>
<organism>
    <name type="scientific">Solanum lycopersicum</name>
    <name type="common">Tomato</name>
    <name type="synonym">Lycopersicon esculentum</name>
    <dbReference type="NCBI Taxonomy" id="4081"/>
    <lineage>
        <taxon>Eukaryota</taxon>
        <taxon>Viridiplantae</taxon>
        <taxon>Streptophyta</taxon>
        <taxon>Embryophyta</taxon>
        <taxon>Tracheophyta</taxon>
        <taxon>Spermatophyta</taxon>
        <taxon>Magnoliopsida</taxon>
        <taxon>eudicotyledons</taxon>
        <taxon>Gunneridae</taxon>
        <taxon>Pentapetalae</taxon>
        <taxon>asterids</taxon>
        <taxon>lamiids</taxon>
        <taxon>Solanales</taxon>
        <taxon>Solanaceae</taxon>
        <taxon>Solanoideae</taxon>
        <taxon>Solaneae</taxon>
        <taxon>Solanum</taxon>
        <taxon>Solanum subgen. Lycopersicon</taxon>
    </lineage>
</organism>
<keyword id="KW-0007">Acetylation</keyword>
<keyword id="KW-0148">Chlorophyll</keyword>
<keyword id="KW-0150">Chloroplast</keyword>
<keyword id="KW-0157">Chromophore</keyword>
<keyword id="KW-0249">Electron transport</keyword>
<keyword id="KW-0408">Iron</keyword>
<keyword id="KW-0460">Magnesium</keyword>
<keyword id="KW-0472">Membrane</keyword>
<keyword id="KW-0479">Metal-binding</keyword>
<keyword id="KW-0560">Oxidoreductase</keyword>
<keyword id="KW-0597">Phosphoprotein</keyword>
<keyword id="KW-0602">Photosynthesis</keyword>
<keyword id="KW-0604">Photosystem II</keyword>
<keyword id="KW-0934">Plastid</keyword>
<keyword id="KW-1185">Reference proteome</keyword>
<keyword id="KW-0793">Thylakoid</keyword>
<keyword id="KW-0812">Transmembrane</keyword>
<keyword id="KW-1133">Transmembrane helix</keyword>
<keyword id="KW-0813">Transport</keyword>
<comment type="function">
    <text evidence="2">Photosystem II (PSII) is a light-driven water:plastoquinone oxidoreductase that uses light energy to abstract electrons from H(2)O, generating O(2) and a proton gradient subsequently used for ATP formation. It consists of a core antenna complex that captures photons, and an electron transfer chain that converts photonic excitation into a charge separation. The D1/D2 (PsbA/PsbD) reaction center heterodimer binds P680, the primary electron donor of PSII as well as several subsequent electron acceptors. D2 is needed for assembly of a stable PSII complex.</text>
</comment>
<comment type="catalytic activity">
    <reaction evidence="2">
        <text>2 a plastoquinone + 4 hnu + 2 H2O = 2 a plastoquinol + O2</text>
        <dbReference type="Rhea" id="RHEA:36359"/>
        <dbReference type="Rhea" id="RHEA-COMP:9561"/>
        <dbReference type="Rhea" id="RHEA-COMP:9562"/>
        <dbReference type="ChEBI" id="CHEBI:15377"/>
        <dbReference type="ChEBI" id="CHEBI:15379"/>
        <dbReference type="ChEBI" id="CHEBI:17757"/>
        <dbReference type="ChEBI" id="CHEBI:30212"/>
        <dbReference type="ChEBI" id="CHEBI:62192"/>
        <dbReference type="EC" id="1.10.3.9"/>
    </reaction>
</comment>
<comment type="cofactor">
    <text evidence="2">The D1/D2 heterodimer binds P680, chlorophylls that are the primary electron donor of PSII, and subsequent electron acceptors. It shares a non-heme iron and each subunit binds pheophytin, quinone, additional chlorophylls, carotenoids and lipids. There is also a Cl(-1) ion associated with D1 and D2, which is required for oxygen evolution. The PSII complex binds additional chlorophylls, carotenoids and specific lipids.</text>
</comment>
<comment type="subunit">
    <text evidence="2">PSII is composed of 1 copy each of membrane proteins PsbA, PsbB, PsbC, PsbD, PsbE, PsbF, PsbH, PsbI, PsbJ, PsbK, PsbL, PsbM, PsbT, PsbX, PsbY, PsbZ, Psb30/Ycf12, at least 3 peripheral proteins of the oxygen-evolving complex and a large number of cofactors. It forms dimeric complexes.</text>
</comment>
<comment type="subcellular location">
    <subcellularLocation>
        <location evidence="2">Plastid</location>
        <location evidence="2">Chloroplast thylakoid membrane</location>
        <topology evidence="2">Multi-pass membrane protein</topology>
    </subcellularLocation>
</comment>
<comment type="miscellaneous">
    <text evidence="2">2 of the reaction center chlorophylls (ChlD1 and ChlD2) are entirely coordinated by water.</text>
</comment>
<comment type="similarity">
    <text evidence="2">Belongs to the reaction center PufL/M/PsbA/D family.</text>
</comment>
<feature type="initiator methionine" description="Removed" evidence="1">
    <location>
        <position position="1"/>
    </location>
</feature>
<feature type="chain" id="PRO_0000277327" description="Photosystem II D2 protein">
    <location>
        <begin position="2"/>
        <end position="353"/>
    </location>
</feature>
<feature type="transmembrane region" description="Helical" evidence="2">
    <location>
        <begin position="41"/>
        <end position="61"/>
    </location>
</feature>
<feature type="transmembrane region" description="Helical" evidence="2">
    <location>
        <begin position="125"/>
        <end position="141"/>
    </location>
</feature>
<feature type="transmembrane region" description="Helical" evidence="2">
    <location>
        <begin position="153"/>
        <end position="166"/>
    </location>
</feature>
<feature type="transmembrane region" description="Helical" evidence="2">
    <location>
        <begin position="208"/>
        <end position="228"/>
    </location>
</feature>
<feature type="transmembrane region" description="Helical" evidence="2">
    <location>
        <begin position="279"/>
        <end position="295"/>
    </location>
</feature>
<feature type="binding site" description="axial binding residue" evidence="2">
    <location>
        <position position="118"/>
    </location>
    <ligand>
        <name>chlorophyll a</name>
        <dbReference type="ChEBI" id="CHEBI:58416"/>
        <label>ChlzD2</label>
    </ligand>
    <ligandPart>
        <name>Mg</name>
        <dbReference type="ChEBI" id="CHEBI:25107"/>
    </ligandPart>
</feature>
<feature type="binding site" evidence="2">
    <location>
        <position position="130"/>
    </location>
    <ligand>
        <name>pheophytin a</name>
        <dbReference type="ChEBI" id="CHEBI:136840"/>
        <label>D2</label>
    </ligand>
</feature>
<feature type="binding site" evidence="2">
    <location>
        <position position="143"/>
    </location>
    <ligand>
        <name>pheophytin a</name>
        <dbReference type="ChEBI" id="CHEBI:136840"/>
        <label>D2</label>
    </ligand>
</feature>
<feature type="binding site" description="axial binding residue" evidence="2">
    <location>
        <position position="198"/>
    </location>
    <ligand>
        <name>chlorophyll a</name>
        <dbReference type="ChEBI" id="CHEBI:58416"/>
        <label>PD2</label>
    </ligand>
    <ligandPart>
        <name>Mg</name>
        <dbReference type="ChEBI" id="CHEBI:25107"/>
    </ligandPart>
</feature>
<feature type="binding site" evidence="2">
    <location>
        <position position="215"/>
    </location>
    <ligand>
        <name>a plastoquinone</name>
        <dbReference type="ChEBI" id="CHEBI:17757"/>
        <label>Q(A)</label>
    </ligand>
</feature>
<feature type="binding site" evidence="2">
    <location>
        <position position="215"/>
    </location>
    <ligand>
        <name>Fe cation</name>
        <dbReference type="ChEBI" id="CHEBI:24875"/>
        <note>ligand shared with heterodimeric partner</note>
    </ligand>
</feature>
<feature type="binding site" evidence="2">
    <location>
        <position position="262"/>
    </location>
    <ligand>
        <name>a plastoquinone</name>
        <dbReference type="ChEBI" id="CHEBI:17757"/>
        <label>Q(A)</label>
    </ligand>
</feature>
<feature type="binding site" evidence="2">
    <location>
        <position position="269"/>
    </location>
    <ligand>
        <name>Fe cation</name>
        <dbReference type="ChEBI" id="CHEBI:24875"/>
        <note>ligand shared with heterodimeric partner</note>
    </ligand>
</feature>
<feature type="modified residue" description="N-acetylthreonine" evidence="1">
    <location>
        <position position="2"/>
    </location>
</feature>
<feature type="modified residue" description="Phosphothreonine" evidence="1">
    <location>
        <position position="2"/>
    </location>
</feature>
<evidence type="ECO:0000250" key="1">
    <source>
        <dbReference type="UniProtKB" id="P56761"/>
    </source>
</evidence>
<evidence type="ECO:0000255" key="2">
    <source>
        <dbReference type="HAMAP-Rule" id="MF_01383"/>
    </source>
</evidence>
<name>PSBD_SOLLC</name>
<sequence>MTIAIGKFTKDENDLFDIMDDWLRRDRFVFVGWSGLLLFPCAYFAVGGWFTGTTFVTSWYTHGLASSYLEGCNFLTAAVSTPANSLAHSLLLLWGPEAQGDFTRWCQLGGLWTFVALHGAFGLIGFMLRQFELARSVQLRPYNAIAFSGPIAVFVSVFLIYPLGQSGWFFAPSFGVAAIFRFILFFQGFHNWTLNPFHMMGVAGVLGAALLCAIHGATVENTLFEDGDGANTFRAFNPTQAEETYSMVTANRFWSQIFGVAFSNKRWLHFFMLFVPVTGLWMSALGVVGLALNLRAYDFVSQEIRAAEDPEFETFYTKNILLNEGIRAWMAAQDQPHENLIFPEEVLPRGNAL</sequence>
<proteinExistence type="inferred from homology"/>
<reference key="1">
    <citation type="journal article" date="2006" name="Theor. Appl. Genet.">
        <title>Complete chloroplast genome sequences of Solanum bulbocastanum, Solanum lycopersicum and comparative analyses with other Solanaceae genomes.</title>
        <authorList>
            <person name="Daniell H."/>
            <person name="Lee S.-B."/>
            <person name="Grevich J."/>
            <person name="Saski C."/>
            <person name="Quesada-Vargas T."/>
            <person name="Guda C."/>
            <person name="Tomkins J."/>
            <person name="Jansen R.K."/>
        </authorList>
    </citation>
    <scope>NUCLEOTIDE SEQUENCE [LARGE SCALE GENOMIC DNA]</scope>
    <source>
        <strain>cv. LA3023</strain>
    </source>
</reference>
<reference key="2">
    <citation type="journal article" date="2006" name="J. Mol. Evol.">
        <title>Sequence of the tomato chloroplast DNA and evolutionary comparison of solanaceous plastid genomes.</title>
        <authorList>
            <person name="Kahlau S."/>
            <person name="Aspinall S."/>
            <person name="Gray J.C."/>
            <person name="Bock R."/>
        </authorList>
    </citation>
    <scope>NUCLEOTIDE SEQUENCE [LARGE SCALE GENOMIC DNA]</scope>
    <source>
        <strain>cv. IPA-6</strain>
    </source>
</reference>
<dbReference type="EC" id="1.10.3.9" evidence="2"/>
<dbReference type="EMBL" id="DQ347959">
    <property type="protein sequence ID" value="ABC56295.1"/>
    <property type="molecule type" value="Genomic_DNA"/>
</dbReference>
<dbReference type="EMBL" id="AM087200">
    <property type="protein sequence ID" value="CAJ32388.1"/>
    <property type="molecule type" value="Genomic_DNA"/>
</dbReference>
<dbReference type="RefSeq" id="AP_004923.1">
    <property type="nucleotide sequence ID" value="AC_000188.1"/>
</dbReference>
<dbReference type="RefSeq" id="YP_008563083.1">
    <property type="nucleotide sequence ID" value="NC_007898.3"/>
</dbReference>
<dbReference type="SMR" id="Q2MIA5"/>
<dbReference type="FunCoup" id="Q2MIA5">
    <property type="interactions" value="368"/>
</dbReference>
<dbReference type="STRING" id="4081.Q2MIA5"/>
<dbReference type="PaxDb" id="4081-Solyc09g055950.1.1"/>
<dbReference type="GeneID" id="3950483"/>
<dbReference type="KEGG" id="sly:3950483"/>
<dbReference type="InParanoid" id="Q2MIA5"/>
<dbReference type="OrthoDB" id="1247798at2759"/>
<dbReference type="Proteomes" id="UP000004994">
    <property type="component" value="Chloroplast"/>
</dbReference>
<dbReference type="ExpressionAtlas" id="Q2MIA5">
    <property type="expression patterns" value="baseline"/>
</dbReference>
<dbReference type="GO" id="GO:0009535">
    <property type="term" value="C:chloroplast thylakoid membrane"/>
    <property type="evidence" value="ECO:0007669"/>
    <property type="project" value="UniProtKB-SubCell"/>
</dbReference>
<dbReference type="GO" id="GO:0009523">
    <property type="term" value="C:photosystem II"/>
    <property type="evidence" value="ECO:0000318"/>
    <property type="project" value="GO_Central"/>
</dbReference>
<dbReference type="GO" id="GO:0016168">
    <property type="term" value="F:chlorophyll binding"/>
    <property type="evidence" value="ECO:0007669"/>
    <property type="project" value="UniProtKB-UniRule"/>
</dbReference>
<dbReference type="GO" id="GO:0045156">
    <property type="term" value="F:electron transporter, transferring electrons within the cyclic electron transport pathway of photosynthesis activity"/>
    <property type="evidence" value="ECO:0007669"/>
    <property type="project" value="InterPro"/>
</dbReference>
<dbReference type="GO" id="GO:0005506">
    <property type="term" value="F:iron ion binding"/>
    <property type="evidence" value="ECO:0007669"/>
    <property type="project" value="UniProtKB-UniRule"/>
</dbReference>
<dbReference type="GO" id="GO:0010242">
    <property type="term" value="F:oxygen evolving activity"/>
    <property type="evidence" value="ECO:0007669"/>
    <property type="project" value="UniProtKB-EC"/>
</dbReference>
<dbReference type="GO" id="GO:0009772">
    <property type="term" value="P:photosynthetic electron transport in photosystem II"/>
    <property type="evidence" value="ECO:0007669"/>
    <property type="project" value="InterPro"/>
</dbReference>
<dbReference type="CDD" id="cd09288">
    <property type="entry name" value="Photosystem-II_D2"/>
    <property type="match status" value="1"/>
</dbReference>
<dbReference type="FunFam" id="1.20.85.10:FF:000001">
    <property type="entry name" value="photosystem II D2 protein-like"/>
    <property type="match status" value="1"/>
</dbReference>
<dbReference type="Gene3D" id="1.20.85.10">
    <property type="entry name" value="Photosystem II protein D1-like"/>
    <property type="match status" value="1"/>
</dbReference>
<dbReference type="HAMAP" id="MF_01383">
    <property type="entry name" value="PSII_PsbD_D2"/>
    <property type="match status" value="1"/>
</dbReference>
<dbReference type="InterPro" id="IPR055266">
    <property type="entry name" value="D1/D2"/>
</dbReference>
<dbReference type="InterPro" id="IPR036854">
    <property type="entry name" value="Photo_II_D1/D2_sf"/>
</dbReference>
<dbReference type="InterPro" id="IPR000484">
    <property type="entry name" value="Photo_RC_L/M"/>
</dbReference>
<dbReference type="InterPro" id="IPR055265">
    <property type="entry name" value="Photo_RC_L/M_CS"/>
</dbReference>
<dbReference type="InterPro" id="IPR005868">
    <property type="entry name" value="PSII_PsbD/D2"/>
</dbReference>
<dbReference type="NCBIfam" id="TIGR01152">
    <property type="entry name" value="psbD"/>
    <property type="match status" value="1"/>
</dbReference>
<dbReference type="PANTHER" id="PTHR33149:SF12">
    <property type="entry name" value="PHOTOSYSTEM II D2 PROTEIN"/>
    <property type="match status" value="1"/>
</dbReference>
<dbReference type="PANTHER" id="PTHR33149">
    <property type="entry name" value="PHOTOSYSTEM II PROTEIN D1"/>
    <property type="match status" value="1"/>
</dbReference>
<dbReference type="Pfam" id="PF00124">
    <property type="entry name" value="Photo_RC"/>
    <property type="match status" value="1"/>
</dbReference>
<dbReference type="PRINTS" id="PR00256">
    <property type="entry name" value="REACTNCENTRE"/>
</dbReference>
<dbReference type="SUPFAM" id="SSF81483">
    <property type="entry name" value="Bacterial photosystem II reaction centre, L and M subunits"/>
    <property type="match status" value="1"/>
</dbReference>
<dbReference type="PROSITE" id="PS00244">
    <property type="entry name" value="REACTION_CENTER"/>
    <property type="match status" value="1"/>
</dbReference>
<geneLocation type="chloroplast"/>
<accession>Q2MIA5</accession>
<protein>
    <recommendedName>
        <fullName evidence="2">Photosystem II D2 protein</fullName>
        <shortName evidence="2">PSII D2 protein</shortName>
        <ecNumber evidence="2">1.10.3.9</ecNumber>
    </recommendedName>
    <alternativeName>
        <fullName evidence="2">Photosystem Q(A) protein</fullName>
    </alternativeName>
</protein>